<name>RL31_RIPO1</name>
<protein>
    <recommendedName>
        <fullName evidence="1">Large ribosomal subunit protein bL31</fullName>
    </recommendedName>
    <alternativeName>
        <fullName evidence="2">50S ribosomal protein L31</fullName>
    </alternativeName>
</protein>
<evidence type="ECO:0000255" key="1">
    <source>
        <dbReference type="HAMAP-Rule" id="MF_00501"/>
    </source>
</evidence>
<evidence type="ECO:0000305" key="2"/>
<feature type="chain" id="PRO_1000126602" description="Large ribosomal subunit protein bL31">
    <location>
        <begin position="1"/>
        <end position="82"/>
    </location>
</feature>
<dbReference type="EMBL" id="CP001287">
    <property type="protein sequence ID" value="ACK64326.1"/>
    <property type="molecule type" value="Genomic_DNA"/>
</dbReference>
<dbReference type="RefSeq" id="WP_012593603.1">
    <property type="nucleotide sequence ID" value="NC_011726.1"/>
</dbReference>
<dbReference type="STRING" id="41431.PCC8801_0223"/>
<dbReference type="KEGG" id="cyp:PCC8801_0223"/>
<dbReference type="eggNOG" id="COG0254">
    <property type="taxonomic scope" value="Bacteria"/>
</dbReference>
<dbReference type="HOGENOM" id="CLU_114306_1_2_3"/>
<dbReference type="OrthoDB" id="9803251at2"/>
<dbReference type="Proteomes" id="UP000008204">
    <property type="component" value="Chromosome"/>
</dbReference>
<dbReference type="GO" id="GO:1990904">
    <property type="term" value="C:ribonucleoprotein complex"/>
    <property type="evidence" value="ECO:0007669"/>
    <property type="project" value="UniProtKB-KW"/>
</dbReference>
<dbReference type="GO" id="GO:0005840">
    <property type="term" value="C:ribosome"/>
    <property type="evidence" value="ECO:0007669"/>
    <property type="project" value="UniProtKB-KW"/>
</dbReference>
<dbReference type="GO" id="GO:0019843">
    <property type="term" value="F:rRNA binding"/>
    <property type="evidence" value="ECO:0007669"/>
    <property type="project" value="UniProtKB-KW"/>
</dbReference>
<dbReference type="GO" id="GO:0003735">
    <property type="term" value="F:structural constituent of ribosome"/>
    <property type="evidence" value="ECO:0007669"/>
    <property type="project" value="InterPro"/>
</dbReference>
<dbReference type="GO" id="GO:0006412">
    <property type="term" value="P:translation"/>
    <property type="evidence" value="ECO:0007669"/>
    <property type="project" value="UniProtKB-UniRule"/>
</dbReference>
<dbReference type="Gene3D" id="4.10.830.30">
    <property type="entry name" value="Ribosomal protein L31"/>
    <property type="match status" value="1"/>
</dbReference>
<dbReference type="HAMAP" id="MF_00501">
    <property type="entry name" value="Ribosomal_bL31_1"/>
    <property type="match status" value="1"/>
</dbReference>
<dbReference type="InterPro" id="IPR034704">
    <property type="entry name" value="Ribosomal_bL28/bL31-like_sf"/>
</dbReference>
<dbReference type="InterPro" id="IPR002150">
    <property type="entry name" value="Ribosomal_bL31"/>
</dbReference>
<dbReference type="InterPro" id="IPR027491">
    <property type="entry name" value="Ribosomal_bL31_A"/>
</dbReference>
<dbReference type="InterPro" id="IPR042105">
    <property type="entry name" value="Ribosomal_bL31_sf"/>
</dbReference>
<dbReference type="NCBIfam" id="TIGR00105">
    <property type="entry name" value="L31"/>
    <property type="match status" value="1"/>
</dbReference>
<dbReference type="NCBIfam" id="NF000612">
    <property type="entry name" value="PRK00019.1"/>
    <property type="match status" value="1"/>
</dbReference>
<dbReference type="NCBIfam" id="NF001809">
    <property type="entry name" value="PRK00528.1"/>
    <property type="match status" value="1"/>
</dbReference>
<dbReference type="PANTHER" id="PTHR33280">
    <property type="entry name" value="50S RIBOSOMAL PROTEIN L31, CHLOROPLASTIC"/>
    <property type="match status" value="1"/>
</dbReference>
<dbReference type="PANTHER" id="PTHR33280:SF1">
    <property type="entry name" value="LARGE RIBOSOMAL SUBUNIT PROTEIN BL31C"/>
    <property type="match status" value="1"/>
</dbReference>
<dbReference type="Pfam" id="PF01197">
    <property type="entry name" value="Ribosomal_L31"/>
    <property type="match status" value="1"/>
</dbReference>
<dbReference type="PRINTS" id="PR01249">
    <property type="entry name" value="RIBOSOMALL31"/>
</dbReference>
<dbReference type="SUPFAM" id="SSF143800">
    <property type="entry name" value="L28p-like"/>
    <property type="match status" value="1"/>
</dbReference>
<dbReference type="PROSITE" id="PS01143">
    <property type="entry name" value="RIBOSOMAL_L31"/>
    <property type="match status" value="1"/>
</dbReference>
<organism>
    <name type="scientific">Rippkaea orientalis (strain PCC 8801 / RF-1)</name>
    <name type="common">Cyanothece sp. (strain PCC 8801)</name>
    <dbReference type="NCBI Taxonomy" id="41431"/>
    <lineage>
        <taxon>Bacteria</taxon>
        <taxon>Bacillati</taxon>
        <taxon>Cyanobacteriota</taxon>
        <taxon>Cyanophyceae</taxon>
        <taxon>Oscillatoriophycideae</taxon>
        <taxon>Chroococcales</taxon>
        <taxon>Aphanothecaceae</taxon>
        <taxon>Rippkaea</taxon>
        <taxon>Rippkaea orientalis</taxon>
    </lineage>
</organism>
<sequence>MPKADIHPTWYPEAKIICNGEVVMTVGSTQPEIHVEVWSGNHPFYTGTQKMIDTEGRIDRFQKRYGNLGKGGSKPNKKGDQK</sequence>
<accession>B7K219</accession>
<keyword id="KW-1185">Reference proteome</keyword>
<keyword id="KW-0687">Ribonucleoprotein</keyword>
<keyword id="KW-0689">Ribosomal protein</keyword>
<keyword id="KW-0694">RNA-binding</keyword>
<keyword id="KW-0699">rRNA-binding</keyword>
<gene>
    <name evidence="1" type="primary">rpmE</name>
    <name evidence="1" type="synonym">rpl31</name>
    <name type="ordered locus">PCC8801_0223</name>
</gene>
<comment type="function">
    <text evidence="1">Binds the 23S rRNA.</text>
</comment>
<comment type="subunit">
    <text evidence="1">Part of the 50S ribosomal subunit.</text>
</comment>
<comment type="similarity">
    <text evidence="1">Belongs to the bacterial ribosomal protein bL31 family. Type A subfamily.</text>
</comment>
<proteinExistence type="inferred from homology"/>
<reference key="1">
    <citation type="journal article" date="2011" name="MBio">
        <title>Novel metabolic attributes of the genus Cyanothece, comprising a group of unicellular nitrogen-fixing Cyanobacteria.</title>
        <authorList>
            <person name="Bandyopadhyay A."/>
            <person name="Elvitigala T."/>
            <person name="Welsh E."/>
            <person name="Stockel J."/>
            <person name="Liberton M."/>
            <person name="Min H."/>
            <person name="Sherman L.A."/>
            <person name="Pakrasi H.B."/>
        </authorList>
    </citation>
    <scope>NUCLEOTIDE SEQUENCE [LARGE SCALE GENOMIC DNA]</scope>
    <source>
        <strain>PCC 8801 / RF-1</strain>
    </source>
</reference>